<feature type="chain" id="PRO_0000325633" description="Uroporphyrinogen decarboxylase">
    <location>
        <begin position="1"/>
        <end position="353"/>
    </location>
</feature>
<feature type="binding site" evidence="1">
    <location>
        <begin position="26"/>
        <end position="30"/>
    </location>
    <ligand>
        <name>substrate</name>
    </ligand>
</feature>
<feature type="binding site" evidence="1">
    <location>
        <position position="76"/>
    </location>
    <ligand>
        <name>substrate</name>
    </ligand>
</feature>
<feature type="binding site" evidence="1">
    <location>
        <position position="153"/>
    </location>
    <ligand>
        <name>substrate</name>
    </ligand>
</feature>
<feature type="binding site" evidence="1">
    <location>
        <position position="208"/>
    </location>
    <ligand>
        <name>substrate</name>
    </ligand>
</feature>
<feature type="binding site" evidence="1">
    <location>
        <position position="326"/>
    </location>
    <ligand>
        <name>substrate</name>
    </ligand>
</feature>
<feature type="site" description="Transition state stabilizer" evidence="1">
    <location>
        <position position="76"/>
    </location>
</feature>
<accession>Q1R1C8</accession>
<name>DCUP_CHRSD</name>
<sequence length="353" mass="39041">MPLQNDRLLRALARQPVDRTPVWMMRQAGRYLPEYRETRGQAGSFMDLCRNAELACEVTMQPLRRYALDAAILFSDILTIPDAMDLGLYFETGEGPKFRKTVRSAEAVDALPVPDAERDLDYVMNAVRTIRHELADSVPLIGFSGSPWTLATYMIEGGSSKDFRHAKALMYGDPAAMHALLDKLARSVTDYLNAQIRAGAQIVQIFDTWGGVLSTPAYREFSLAYMARIVEGLIREHEGRHVPVILFTKQGGQWLETIADSGADAVGLDWTTELSDARARVGDRVALQGNLDPNVLFASPQAIRDEVARILASYGSGPGHVFNLGHGVSQFTDPDHVAAFIEALHELSPRYHG</sequence>
<reference key="1">
    <citation type="journal article" date="2011" name="Stand. Genomic Sci.">
        <title>Complete genome sequence of the halophilic and highly halotolerant Chromohalobacter salexigens type strain (1H11(T)).</title>
        <authorList>
            <person name="Copeland A."/>
            <person name="O'Connor K."/>
            <person name="Lucas S."/>
            <person name="Lapidus A."/>
            <person name="Berry K.W."/>
            <person name="Detter J.C."/>
            <person name="Del Rio T.G."/>
            <person name="Hammon N."/>
            <person name="Dalin E."/>
            <person name="Tice H."/>
            <person name="Pitluck S."/>
            <person name="Bruce D."/>
            <person name="Goodwin L."/>
            <person name="Han C."/>
            <person name="Tapia R."/>
            <person name="Saunders E."/>
            <person name="Schmutz J."/>
            <person name="Brettin T."/>
            <person name="Larimer F."/>
            <person name="Land M."/>
            <person name="Hauser L."/>
            <person name="Vargas C."/>
            <person name="Nieto J.J."/>
            <person name="Kyrpides N.C."/>
            <person name="Ivanova N."/>
            <person name="Goker M."/>
            <person name="Klenk H.P."/>
            <person name="Csonka L.N."/>
            <person name="Woyke T."/>
        </authorList>
    </citation>
    <scope>NUCLEOTIDE SEQUENCE [LARGE SCALE GENOMIC DNA]</scope>
    <source>
        <strain>ATCC BAA-138 / DSM 3043 / CIP 106854 / NCIMB 13768 / 1H11</strain>
    </source>
</reference>
<keyword id="KW-0963">Cytoplasm</keyword>
<keyword id="KW-0210">Decarboxylase</keyword>
<keyword id="KW-0456">Lyase</keyword>
<keyword id="KW-0627">Porphyrin biosynthesis</keyword>
<keyword id="KW-1185">Reference proteome</keyword>
<protein>
    <recommendedName>
        <fullName evidence="1">Uroporphyrinogen decarboxylase</fullName>
        <shortName evidence="1">UPD</shortName>
        <shortName evidence="1">URO-D</shortName>
        <ecNumber evidence="1">4.1.1.37</ecNumber>
    </recommendedName>
</protein>
<gene>
    <name evidence="1" type="primary">hemE</name>
    <name type="ordered locus">Csal_0116</name>
</gene>
<organism>
    <name type="scientific">Chromohalobacter salexigens (strain ATCC BAA-138 / DSM 3043 / CIP 106854 / NCIMB 13768 / 1H11)</name>
    <dbReference type="NCBI Taxonomy" id="290398"/>
    <lineage>
        <taxon>Bacteria</taxon>
        <taxon>Pseudomonadati</taxon>
        <taxon>Pseudomonadota</taxon>
        <taxon>Gammaproteobacteria</taxon>
        <taxon>Oceanospirillales</taxon>
        <taxon>Halomonadaceae</taxon>
        <taxon>Chromohalobacter</taxon>
    </lineage>
</organism>
<proteinExistence type="inferred from homology"/>
<dbReference type="EC" id="4.1.1.37" evidence="1"/>
<dbReference type="EMBL" id="CP000285">
    <property type="protein sequence ID" value="ABE57480.1"/>
    <property type="molecule type" value="Genomic_DNA"/>
</dbReference>
<dbReference type="RefSeq" id="WP_011505426.1">
    <property type="nucleotide sequence ID" value="NC_007963.1"/>
</dbReference>
<dbReference type="SMR" id="Q1R1C8"/>
<dbReference type="STRING" id="290398.Csal_0116"/>
<dbReference type="GeneID" id="95332866"/>
<dbReference type="KEGG" id="csa:Csal_0116"/>
<dbReference type="eggNOG" id="COG0407">
    <property type="taxonomic scope" value="Bacteria"/>
</dbReference>
<dbReference type="HOGENOM" id="CLU_040933_0_0_6"/>
<dbReference type="OrthoDB" id="9806656at2"/>
<dbReference type="UniPathway" id="UPA00251">
    <property type="reaction ID" value="UER00321"/>
</dbReference>
<dbReference type="Proteomes" id="UP000000239">
    <property type="component" value="Chromosome"/>
</dbReference>
<dbReference type="GO" id="GO:0005829">
    <property type="term" value="C:cytosol"/>
    <property type="evidence" value="ECO:0007669"/>
    <property type="project" value="TreeGrafter"/>
</dbReference>
<dbReference type="GO" id="GO:0004853">
    <property type="term" value="F:uroporphyrinogen decarboxylase activity"/>
    <property type="evidence" value="ECO:0007669"/>
    <property type="project" value="UniProtKB-UniRule"/>
</dbReference>
<dbReference type="GO" id="GO:0019353">
    <property type="term" value="P:protoporphyrinogen IX biosynthetic process from glutamate"/>
    <property type="evidence" value="ECO:0007669"/>
    <property type="project" value="TreeGrafter"/>
</dbReference>
<dbReference type="CDD" id="cd00717">
    <property type="entry name" value="URO-D"/>
    <property type="match status" value="1"/>
</dbReference>
<dbReference type="FunFam" id="3.20.20.210:FF:000001">
    <property type="entry name" value="Uroporphyrinogen decarboxylase"/>
    <property type="match status" value="1"/>
</dbReference>
<dbReference type="Gene3D" id="3.20.20.210">
    <property type="match status" value="1"/>
</dbReference>
<dbReference type="HAMAP" id="MF_00218">
    <property type="entry name" value="URO_D"/>
    <property type="match status" value="1"/>
</dbReference>
<dbReference type="InterPro" id="IPR038071">
    <property type="entry name" value="UROD/MetE-like_sf"/>
</dbReference>
<dbReference type="InterPro" id="IPR006361">
    <property type="entry name" value="Uroporphyrinogen_deCO2ase_HemE"/>
</dbReference>
<dbReference type="InterPro" id="IPR000257">
    <property type="entry name" value="Uroporphyrinogen_deCOase"/>
</dbReference>
<dbReference type="NCBIfam" id="TIGR01464">
    <property type="entry name" value="hemE"/>
    <property type="match status" value="1"/>
</dbReference>
<dbReference type="PANTHER" id="PTHR21091">
    <property type="entry name" value="METHYLTETRAHYDROFOLATE:HOMOCYSTEINE METHYLTRANSFERASE RELATED"/>
    <property type="match status" value="1"/>
</dbReference>
<dbReference type="PANTHER" id="PTHR21091:SF169">
    <property type="entry name" value="UROPORPHYRINOGEN DECARBOXYLASE"/>
    <property type="match status" value="1"/>
</dbReference>
<dbReference type="Pfam" id="PF01208">
    <property type="entry name" value="URO-D"/>
    <property type="match status" value="1"/>
</dbReference>
<dbReference type="SUPFAM" id="SSF51726">
    <property type="entry name" value="UROD/MetE-like"/>
    <property type="match status" value="1"/>
</dbReference>
<dbReference type="PROSITE" id="PS00906">
    <property type="entry name" value="UROD_1"/>
    <property type="match status" value="1"/>
</dbReference>
<dbReference type="PROSITE" id="PS00907">
    <property type="entry name" value="UROD_2"/>
    <property type="match status" value="1"/>
</dbReference>
<comment type="function">
    <text evidence="1">Catalyzes the decarboxylation of four acetate groups of uroporphyrinogen-III to yield coproporphyrinogen-III.</text>
</comment>
<comment type="catalytic activity">
    <reaction evidence="1">
        <text>uroporphyrinogen III + 4 H(+) = coproporphyrinogen III + 4 CO2</text>
        <dbReference type="Rhea" id="RHEA:19865"/>
        <dbReference type="ChEBI" id="CHEBI:15378"/>
        <dbReference type="ChEBI" id="CHEBI:16526"/>
        <dbReference type="ChEBI" id="CHEBI:57308"/>
        <dbReference type="ChEBI" id="CHEBI:57309"/>
        <dbReference type="EC" id="4.1.1.37"/>
    </reaction>
</comment>
<comment type="pathway">
    <text evidence="1">Porphyrin-containing compound metabolism; protoporphyrin-IX biosynthesis; coproporphyrinogen-III from 5-aminolevulinate: step 4/4.</text>
</comment>
<comment type="subunit">
    <text evidence="1">Homodimer.</text>
</comment>
<comment type="subcellular location">
    <subcellularLocation>
        <location evidence="1">Cytoplasm</location>
    </subcellularLocation>
</comment>
<comment type="similarity">
    <text evidence="1">Belongs to the uroporphyrinogen decarboxylase family.</text>
</comment>
<evidence type="ECO:0000255" key="1">
    <source>
        <dbReference type="HAMAP-Rule" id="MF_00218"/>
    </source>
</evidence>